<evidence type="ECO:0000269" key="1">
    <source>
    </source>
</evidence>
<evidence type="ECO:0000305" key="2"/>
<feature type="chain" id="PRO_0000237684" description="Anaphase-promoting complex subunit 13">
    <location>
        <begin position="1"/>
        <end position="135"/>
    </location>
</feature>
<protein>
    <recommendedName>
        <fullName>Anaphase-promoting complex subunit 13</fullName>
    </recommendedName>
    <alternativeName>
        <fullName>20S cyclosome/APC complex protein apc13</fullName>
    </alternativeName>
</protein>
<sequence length="135" mass="15628">MDSNYNYVHMNKPGVVLFASDWLKDRLPVDDVEVRVEHLPPVTEDEMTIQHSSANLILMKNKQLRHEPAWKDLELEDLVNAFAFIQGSSNAEGKNTIEDNFETDPFKSVKEAPMAPFLEANRRHQGEHASMRYFR</sequence>
<comment type="function">
    <text evidence="1">Component of the anaphase promoting complex/cyclosome (APC/C), a cell cycle-regulated E3 ubiquitin-protein ligase complex that controls progression through mitosis and the G1 phase of the cell cycle. The APC/C is thought to confer substrate specificity and, in the presence of ubiquitin-conjugating E2 enzymes, it catalyzes the formation of protein-ubiquitin conjugates that are subsequently degraded by the 26S proteasome.</text>
</comment>
<comment type="subunit">
    <text evidence="1">The APC/C is composed of at least 13 subunits: apc1, apc2, nuc2, apc4, apc5, cut9, apc8, apc10, apc11, hcn1, apc13, apc14 and apc15.</text>
</comment>
<comment type="interaction">
    <interactant intactId="EBI-1251583">
        <id>O74358</id>
    </interactant>
    <interactant intactId="EBI-1251604">
        <id>O94688</id>
        <label>apc15</label>
    </interactant>
    <organismsDiffer>false</organismsDiffer>
    <experiments>3</experiments>
</comment>
<comment type="interaction">
    <interactant intactId="EBI-1251583">
        <id>O74358</id>
    </interactant>
    <interactant intactId="EBI-1251472">
        <id>O42839</id>
        <label>cut20</label>
    </interactant>
    <organismsDiffer>false</organismsDiffer>
    <experiments>4</experiments>
</comment>
<comment type="similarity">
    <text evidence="2">Belongs to the APC13 family.</text>
</comment>
<reference key="1">
    <citation type="journal article" date="2002" name="Nature">
        <title>The genome sequence of Schizosaccharomyces pombe.</title>
        <authorList>
            <person name="Wood V."/>
            <person name="Gwilliam R."/>
            <person name="Rajandream M.A."/>
            <person name="Lyne M.H."/>
            <person name="Lyne R."/>
            <person name="Stewart A."/>
            <person name="Sgouros J.G."/>
            <person name="Peat N."/>
            <person name="Hayles J."/>
            <person name="Baker S.G."/>
            <person name="Basham D."/>
            <person name="Bowman S."/>
            <person name="Brooks K."/>
            <person name="Brown D."/>
            <person name="Brown S."/>
            <person name="Chillingworth T."/>
            <person name="Churcher C.M."/>
            <person name="Collins M."/>
            <person name="Connor R."/>
            <person name="Cronin A."/>
            <person name="Davis P."/>
            <person name="Feltwell T."/>
            <person name="Fraser A."/>
            <person name="Gentles S."/>
            <person name="Goble A."/>
            <person name="Hamlin N."/>
            <person name="Harris D.E."/>
            <person name="Hidalgo J."/>
            <person name="Hodgson G."/>
            <person name="Holroyd S."/>
            <person name="Hornsby T."/>
            <person name="Howarth S."/>
            <person name="Huckle E.J."/>
            <person name="Hunt S."/>
            <person name="Jagels K."/>
            <person name="James K.D."/>
            <person name="Jones L."/>
            <person name="Jones M."/>
            <person name="Leather S."/>
            <person name="McDonald S."/>
            <person name="McLean J."/>
            <person name="Mooney P."/>
            <person name="Moule S."/>
            <person name="Mungall K.L."/>
            <person name="Murphy L.D."/>
            <person name="Niblett D."/>
            <person name="Odell C."/>
            <person name="Oliver K."/>
            <person name="O'Neil S."/>
            <person name="Pearson D."/>
            <person name="Quail M.A."/>
            <person name="Rabbinowitsch E."/>
            <person name="Rutherford K.M."/>
            <person name="Rutter S."/>
            <person name="Saunders D."/>
            <person name="Seeger K."/>
            <person name="Sharp S."/>
            <person name="Skelton J."/>
            <person name="Simmonds M.N."/>
            <person name="Squares R."/>
            <person name="Squares S."/>
            <person name="Stevens K."/>
            <person name="Taylor K."/>
            <person name="Taylor R.G."/>
            <person name="Tivey A."/>
            <person name="Walsh S.V."/>
            <person name="Warren T."/>
            <person name="Whitehead S."/>
            <person name="Woodward J.R."/>
            <person name="Volckaert G."/>
            <person name="Aert R."/>
            <person name="Robben J."/>
            <person name="Grymonprez B."/>
            <person name="Weltjens I."/>
            <person name="Vanstreels E."/>
            <person name="Rieger M."/>
            <person name="Schaefer M."/>
            <person name="Mueller-Auer S."/>
            <person name="Gabel C."/>
            <person name="Fuchs M."/>
            <person name="Duesterhoeft A."/>
            <person name="Fritzc C."/>
            <person name="Holzer E."/>
            <person name="Moestl D."/>
            <person name="Hilbert H."/>
            <person name="Borzym K."/>
            <person name="Langer I."/>
            <person name="Beck A."/>
            <person name="Lehrach H."/>
            <person name="Reinhardt R."/>
            <person name="Pohl T.M."/>
            <person name="Eger P."/>
            <person name="Zimmermann W."/>
            <person name="Wedler H."/>
            <person name="Wambutt R."/>
            <person name="Purnelle B."/>
            <person name="Goffeau A."/>
            <person name="Cadieu E."/>
            <person name="Dreano S."/>
            <person name="Gloux S."/>
            <person name="Lelaure V."/>
            <person name="Mottier S."/>
            <person name="Galibert F."/>
            <person name="Aves S.J."/>
            <person name="Xiang Z."/>
            <person name="Hunt C."/>
            <person name="Moore K."/>
            <person name="Hurst S.M."/>
            <person name="Lucas M."/>
            <person name="Rochet M."/>
            <person name="Gaillardin C."/>
            <person name="Tallada V.A."/>
            <person name="Garzon A."/>
            <person name="Thode G."/>
            <person name="Daga R.R."/>
            <person name="Cruzado L."/>
            <person name="Jimenez J."/>
            <person name="Sanchez M."/>
            <person name="del Rey F."/>
            <person name="Benito J."/>
            <person name="Dominguez A."/>
            <person name="Revuelta J.L."/>
            <person name="Moreno S."/>
            <person name="Armstrong J."/>
            <person name="Forsburg S.L."/>
            <person name="Cerutti L."/>
            <person name="Lowe T."/>
            <person name="McCombie W.R."/>
            <person name="Paulsen I."/>
            <person name="Potashkin J."/>
            <person name="Shpakovski G.V."/>
            <person name="Ussery D."/>
            <person name="Barrell B.G."/>
            <person name="Nurse P."/>
        </authorList>
    </citation>
    <scope>NUCLEOTIDE SEQUENCE [LARGE SCALE GENOMIC DNA]</scope>
    <source>
        <strain>972 / ATCC 24843</strain>
    </source>
</reference>
<reference key="2">
    <citation type="journal article" date="2002" name="Curr. Biol.">
        <title>Proteomics analysis identifies new components of the fission and budding yeast anaphase-promoting complexes.</title>
        <authorList>
            <person name="Yoon H.-J."/>
            <person name="Feoktistova A."/>
            <person name="Wolfe B.A."/>
            <person name="Jennings J.L."/>
            <person name="Link A.J."/>
            <person name="Gould K.L."/>
        </authorList>
    </citation>
    <scope>FUNCTION</scope>
    <scope>SUBUNIT</scope>
</reference>
<name>APC13_SCHPO</name>
<accession>O74358</accession>
<organism>
    <name type="scientific">Schizosaccharomyces pombe (strain 972 / ATCC 24843)</name>
    <name type="common">Fission yeast</name>
    <dbReference type="NCBI Taxonomy" id="284812"/>
    <lineage>
        <taxon>Eukaryota</taxon>
        <taxon>Fungi</taxon>
        <taxon>Dikarya</taxon>
        <taxon>Ascomycota</taxon>
        <taxon>Taphrinomycotina</taxon>
        <taxon>Schizosaccharomycetes</taxon>
        <taxon>Schizosaccharomycetales</taxon>
        <taxon>Schizosaccharomycetaceae</taxon>
        <taxon>Schizosaccharomyces</taxon>
    </lineage>
</organism>
<gene>
    <name type="primary">apc13</name>
    <name type="ORF">SPBC28E12.01c</name>
    <name type="ORF">SPBC9B6.12c</name>
</gene>
<dbReference type="EMBL" id="CU329671">
    <property type="protein sequence ID" value="CAB42373.1"/>
    <property type="molecule type" value="Genomic_DNA"/>
</dbReference>
<dbReference type="PIR" id="T40038">
    <property type="entry name" value="T40038"/>
</dbReference>
<dbReference type="RefSeq" id="NP_595754.1">
    <property type="nucleotide sequence ID" value="NM_001021654.1"/>
</dbReference>
<dbReference type="BioGRID" id="276816">
    <property type="interactions" value="13"/>
</dbReference>
<dbReference type="ComplexPortal" id="CPX-763">
    <property type="entry name" value="Anaphase-promoting complex"/>
</dbReference>
<dbReference type="ComplexPortal" id="CPX-764">
    <property type="entry name" value="Anaphase-promoting complex, slp1 variant"/>
</dbReference>
<dbReference type="ComplexPortal" id="CPX-765">
    <property type="entry name" value="Anaphase-promoting complex, srw1 variant"/>
</dbReference>
<dbReference type="ComplexPortal" id="CPX-766">
    <property type="entry name" value="Anaphase-promoting complex, mfr1 variant"/>
</dbReference>
<dbReference type="FunCoup" id="O74358">
    <property type="interactions" value="15"/>
</dbReference>
<dbReference type="IntAct" id="O74358">
    <property type="interactions" value="12"/>
</dbReference>
<dbReference type="STRING" id="284812.O74358"/>
<dbReference type="PaxDb" id="4896-SPBC28E12.01c.1"/>
<dbReference type="EnsemblFungi" id="SPBC28E12.01c.1">
    <property type="protein sequence ID" value="SPBC28E12.01c.1:pep"/>
    <property type="gene ID" value="SPBC28E12.01c"/>
</dbReference>
<dbReference type="GeneID" id="2540285"/>
<dbReference type="KEGG" id="spo:2540285"/>
<dbReference type="PomBase" id="SPBC28E12.01c">
    <property type="gene designation" value="apc13"/>
</dbReference>
<dbReference type="VEuPathDB" id="FungiDB:SPBC28E12.01c"/>
<dbReference type="eggNOG" id="ENOG502S7KP">
    <property type="taxonomic scope" value="Eukaryota"/>
</dbReference>
<dbReference type="HOGENOM" id="CLU_1928797_0_0_1"/>
<dbReference type="InParanoid" id="O74358"/>
<dbReference type="OMA" id="ILMRSKQ"/>
<dbReference type="PRO" id="PR:O74358"/>
<dbReference type="Proteomes" id="UP000002485">
    <property type="component" value="Chromosome II"/>
</dbReference>
<dbReference type="GO" id="GO:0005680">
    <property type="term" value="C:anaphase-promoting complex"/>
    <property type="evidence" value="ECO:0000314"/>
    <property type="project" value="PomBase"/>
</dbReference>
<dbReference type="GO" id="GO:0005829">
    <property type="term" value="C:cytosol"/>
    <property type="evidence" value="ECO:0007005"/>
    <property type="project" value="PomBase"/>
</dbReference>
<dbReference type="GO" id="GO:0005634">
    <property type="term" value="C:nucleus"/>
    <property type="evidence" value="ECO:0007005"/>
    <property type="project" value="PomBase"/>
</dbReference>
<dbReference type="GO" id="GO:0031145">
    <property type="term" value="P:anaphase-promoting complex-dependent catabolic process"/>
    <property type="evidence" value="ECO:0000315"/>
    <property type="project" value="PomBase"/>
</dbReference>
<dbReference type="GO" id="GO:0051301">
    <property type="term" value="P:cell division"/>
    <property type="evidence" value="ECO:0007669"/>
    <property type="project" value="UniProtKB-KW"/>
</dbReference>
<dbReference type="InterPro" id="IPR008401">
    <property type="entry name" value="Apc13"/>
</dbReference>
<dbReference type="PANTHER" id="PTHR28526">
    <property type="entry name" value="ANAPHASE-PROMOTING COMPLEX SUBUNIT 13"/>
    <property type="match status" value="1"/>
</dbReference>
<dbReference type="PANTHER" id="PTHR28526:SF1">
    <property type="entry name" value="ANAPHASE-PROMOTING COMPLEX SUBUNIT 13"/>
    <property type="match status" value="1"/>
</dbReference>
<dbReference type="Pfam" id="PF05839">
    <property type="entry name" value="Apc13p"/>
    <property type="match status" value="1"/>
</dbReference>
<proteinExistence type="evidence at protein level"/>
<keyword id="KW-0131">Cell cycle</keyword>
<keyword id="KW-0132">Cell division</keyword>
<keyword id="KW-0498">Mitosis</keyword>
<keyword id="KW-1185">Reference proteome</keyword>
<keyword id="KW-0833">Ubl conjugation pathway</keyword>